<organism>
    <name type="scientific">Vibrio cholerae serotype O1 (strain M66-2)</name>
    <dbReference type="NCBI Taxonomy" id="579112"/>
    <lineage>
        <taxon>Bacteria</taxon>
        <taxon>Pseudomonadati</taxon>
        <taxon>Pseudomonadota</taxon>
        <taxon>Gammaproteobacteria</taxon>
        <taxon>Vibrionales</taxon>
        <taxon>Vibrionaceae</taxon>
        <taxon>Vibrio</taxon>
    </lineage>
</organism>
<gene>
    <name type="ordered locus">VCM66_A0006</name>
</gene>
<feature type="chain" id="PRO_1000200119" description="Probable transcriptional regulatory protein VCM66_A0006">
    <location>
        <begin position="1"/>
        <end position="239"/>
    </location>
</feature>
<evidence type="ECO:0000255" key="1">
    <source>
        <dbReference type="HAMAP-Rule" id="MF_00693"/>
    </source>
</evidence>
<dbReference type="EMBL" id="CP001234">
    <property type="protein sequence ID" value="ACP06993.1"/>
    <property type="molecule type" value="Genomic_DNA"/>
</dbReference>
<dbReference type="RefSeq" id="WP_000533705.1">
    <property type="nucleotide sequence ID" value="NC_012580.1"/>
</dbReference>
<dbReference type="SMR" id="C3LU38"/>
<dbReference type="KEGG" id="vcm:VCM66_A0006"/>
<dbReference type="HOGENOM" id="CLU_062974_2_0_6"/>
<dbReference type="Proteomes" id="UP000001217">
    <property type="component" value="Chromosome II"/>
</dbReference>
<dbReference type="GO" id="GO:0005829">
    <property type="term" value="C:cytosol"/>
    <property type="evidence" value="ECO:0007669"/>
    <property type="project" value="TreeGrafter"/>
</dbReference>
<dbReference type="GO" id="GO:0003677">
    <property type="term" value="F:DNA binding"/>
    <property type="evidence" value="ECO:0007669"/>
    <property type="project" value="UniProtKB-UniRule"/>
</dbReference>
<dbReference type="GO" id="GO:0006355">
    <property type="term" value="P:regulation of DNA-templated transcription"/>
    <property type="evidence" value="ECO:0007669"/>
    <property type="project" value="UniProtKB-UniRule"/>
</dbReference>
<dbReference type="FunFam" id="3.30.70.980:FF:000025">
    <property type="entry name" value="Probable transcriptional regulatory protein VCRC385_02559"/>
    <property type="match status" value="1"/>
</dbReference>
<dbReference type="FunFam" id="1.10.10.200:FF:000003">
    <property type="entry name" value="Probable transcriptional regulatory protein YeeN"/>
    <property type="match status" value="1"/>
</dbReference>
<dbReference type="Gene3D" id="1.10.10.200">
    <property type="match status" value="1"/>
</dbReference>
<dbReference type="Gene3D" id="3.30.70.980">
    <property type="match status" value="2"/>
</dbReference>
<dbReference type="HAMAP" id="MF_00693">
    <property type="entry name" value="Transcrip_reg_TACO1"/>
    <property type="match status" value="1"/>
</dbReference>
<dbReference type="InterPro" id="IPR017856">
    <property type="entry name" value="Integrase-like_N"/>
</dbReference>
<dbReference type="InterPro" id="IPR048300">
    <property type="entry name" value="TACO1_YebC-like_2nd/3rd_dom"/>
</dbReference>
<dbReference type="InterPro" id="IPR049083">
    <property type="entry name" value="TACO1_YebC_N"/>
</dbReference>
<dbReference type="InterPro" id="IPR002876">
    <property type="entry name" value="Transcrip_reg_TACO1-like"/>
</dbReference>
<dbReference type="InterPro" id="IPR026564">
    <property type="entry name" value="Transcrip_reg_TACO1-like_dom3"/>
</dbReference>
<dbReference type="InterPro" id="IPR029072">
    <property type="entry name" value="YebC-like"/>
</dbReference>
<dbReference type="NCBIfam" id="NF009044">
    <property type="entry name" value="PRK12378.1"/>
    <property type="match status" value="1"/>
</dbReference>
<dbReference type="PANTHER" id="PTHR12532">
    <property type="entry name" value="TRANSLATIONAL ACTIVATOR OF CYTOCHROME C OXIDASE 1"/>
    <property type="match status" value="1"/>
</dbReference>
<dbReference type="PANTHER" id="PTHR12532:SF0">
    <property type="entry name" value="TRANSLATIONAL ACTIVATOR OF CYTOCHROME C OXIDASE 1"/>
    <property type="match status" value="1"/>
</dbReference>
<dbReference type="Pfam" id="PF20772">
    <property type="entry name" value="TACO1_YebC_N"/>
    <property type="match status" value="1"/>
</dbReference>
<dbReference type="Pfam" id="PF01709">
    <property type="entry name" value="Transcrip_reg"/>
    <property type="match status" value="1"/>
</dbReference>
<dbReference type="SUPFAM" id="SSF75625">
    <property type="entry name" value="YebC-like"/>
    <property type="match status" value="1"/>
</dbReference>
<keyword id="KW-0963">Cytoplasm</keyword>
<keyword id="KW-0238">DNA-binding</keyword>
<keyword id="KW-0804">Transcription</keyword>
<keyword id="KW-0805">Transcription regulation</keyword>
<reference key="1">
    <citation type="journal article" date="2008" name="PLoS ONE">
        <title>A recalibrated molecular clock and independent origins for the cholera pandemic clones.</title>
        <authorList>
            <person name="Feng L."/>
            <person name="Reeves P.R."/>
            <person name="Lan R."/>
            <person name="Ren Y."/>
            <person name="Gao C."/>
            <person name="Zhou Z."/>
            <person name="Ren Y."/>
            <person name="Cheng J."/>
            <person name="Wang W."/>
            <person name="Wang J."/>
            <person name="Qian W."/>
            <person name="Li D."/>
            <person name="Wang L."/>
        </authorList>
    </citation>
    <scope>NUCLEOTIDE SEQUENCE [LARGE SCALE GENOMIC DNA]</scope>
    <source>
        <strain>M66-2</strain>
    </source>
</reference>
<accession>C3LU38</accession>
<name>Y2806_VIBCM</name>
<protein>
    <recommendedName>
        <fullName evidence="1">Probable transcriptional regulatory protein VCM66_A0006</fullName>
    </recommendedName>
</protein>
<sequence>MGRSFEVRKASMAKTQGAKIKVYSKYGKEIYVCAKNGGTDPDMNLSLRHLITKAKKDQVPAHVIEKALDKASGGAGEDYQPARYEGFGPGGASVIVDCLTDNGNRTYQDVRQCFVKTGAKIGTPGVVAHMFDHQAVFQFQGDDEEAILEALMMADAEVTDIEHEDGVITVFAPNTEFFKVKTALNEAFPDLTLDVEEITFVPQNRTVVSGEDAEKFQKFLDMLDDCDDVQQVYHNADIE</sequence>
<proteinExistence type="inferred from homology"/>
<comment type="subcellular location">
    <subcellularLocation>
        <location evidence="1">Cytoplasm</location>
    </subcellularLocation>
</comment>
<comment type="similarity">
    <text evidence="1">Belongs to the TACO1 family.</text>
</comment>